<organism>
    <name type="scientific">Dichelobacter nodosus (strain VCS1703A)</name>
    <dbReference type="NCBI Taxonomy" id="246195"/>
    <lineage>
        <taxon>Bacteria</taxon>
        <taxon>Pseudomonadati</taxon>
        <taxon>Pseudomonadota</taxon>
        <taxon>Gammaproteobacteria</taxon>
        <taxon>Cardiobacteriales</taxon>
        <taxon>Cardiobacteriaceae</taxon>
        <taxon>Dichelobacter</taxon>
    </lineage>
</organism>
<keyword id="KW-0963">Cytoplasm</keyword>
<keyword id="KW-0274">FAD</keyword>
<keyword id="KW-0285">Flavoprotein</keyword>
<keyword id="KW-0489">Methyltransferase</keyword>
<keyword id="KW-0511">Multifunctional enzyme</keyword>
<keyword id="KW-0560">Oxidoreductase</keyword>
<keyword id="KW-1185">Reference proteome</keyword>
<keyword id="KW-0949">S-adenosyl-L-methionine</keyword>
<keyword id="KW-0808">Transferase</keyword>
<keyword id="KW-0819">tRNA processing</keyword>
<protein>
    <recommendedName>
        <fullName evidence="1">tRNA 5-methylaminomethyl-2-thiouridine biosynthesis bifunctional protein MnmC</fullName>
        <shortName evidence="1">tRNA mnm(5)s(2)U biosynthesis bifunctional protein</shortName>
    </recommendedName>
    <domain>
        <recommendedName>
            <fullName evidence="1">tRNA (mnm(5)s(2)U34)-methyltransferase</fullName>
            <ecNumber evidence="1">2.1.1.61</ecNumber>
        </recommendedName>
    </domain>
    <domain>
        <recommendedName>
            <fullName evidence="1">FAD-dependent cmnm(5)s(2)U34 oxidoreductase</fullName>
            <ecNumber evidence="1">1.5.-.-</ecNumber>
        </recommendedName>
    </domain>
</protein>
<dbReference type="EC" id="2.1.1.61" evidence="1"/>
<dbReference type="EC" id="1.5.-.-" evidence="1"/>
<dbReference type="EMBL" id="CP000513">
    <property type="protein sequence ID" value="ABQ13519.1"/>
    <property type="molecule type" value="Genomic_DNA"/>
</dbReference>
<dbReference type="RefSeq" id="WP_012030588.1">
    <property type="nucleotide sequence ID" value="NC_009446.1"/>
</dbReference>
<dbReference type="SMR" id="A5EWE5"/>
<dbReference type="STRING" id="246195.DNO_0240"/>
<dbReference type="KEGG" id="dno:DNO_0240"/>
<dbReference type="eggNOG" id="COG0665">
    <property type="taxonomic scope" value="Bacteria"/>
</dbReference>
<dbReference type="eggNOG" id="COG4121">
    <property type="taxonomic scope" value="Bacteria"/>
</dbReference>
<dbReference type="HOGENOM" id="CLU_022427_1_0_6"/>
<dbReference type="OrthoDB" id="9786494at2"/>
<dbReference type="Proteomes" id="UP000000248">
    <property type="component" value="Chromosome"/>
</dbReference>
<dbReference type="GO" id="GO:0005737">
    <property type="term" value="C:cytoplasm"/>
    <property type="evidence" value="ECO:0007669"/>
    <property type="project" value="UniProtKB-SubCell"/>
</dbReference>
<dbReference type="GO" id="GO:0050660">
    <property type="term" value="F:flavin adenine dinucleotide binding"/>
    <property type="evidence" value="ECO:0007669"/>
    <property type="project" value="UniProtKB-UniRule"/>
</dbReference>
<dbReference type="GO" id="GO:0016645">
    <property type="term" value="F:oxidoreductase activity, acting on the CH-NH group of donors"/>
    <property type="evidence" value="ECO:0007669"/>
    <property type="project" value="InterPro"/>
</dbReference>
<dbReference type="GO" id="GO:0004808">
    <property type="term" value="F:tRNA (5-methylaminomethyl-2-thiouridylate)(34)-methyltransferase activity"/>
    <property type="evidence" value="ECO:0007669"/>
    <property type="project" value="UniProtKB-EC"/>
</dbReference>
<dbReference type="GO" id="GO:0032259">
    <property type="term" value="P:methylation"/>
    <property type="evidence" value="ECO:0007669"/>
    <property type="project" value="UniProtKB-KW"/>
</dbReference>
<dbReference type="GO" id="GO:0002097">
    <property type="term" value="P:tRNA wobble base modification"/>
    <property type="evidence" value="ECO:0007669"/>
    <property type="project" value="UniProtKB-UniRule"/>
</dbReference>
<dbReference type="Gene3D" id="3.30.9.10">
    <property type="entry name" value="D-Amino Acid Oxidase, subunit A, domain 2"/>
    <property type="match status" value="1"/>
</dbReference>
<dbReference type="Gene3D" id="3.50.50.60">
    <property type="entry name" value="FAD/NAD(P)-binding domain"/>
    <property type="match status" value="1"/>
</dbReference>
<dbReference type="Gene3D" id="3.40.50.150">
    <property type="entry name" value="Vaccinia Virus protein VP39"/>
    <property type="match status" value="1"/>
</dbReference>
<dbReference type="HAMAP" id="MF_01102">
    <property type="entry name" value="MnmC"/>
    <property type="match status" value="1"/>
</dbReference>
<dbReference type="InterPro" id="IPR006076">
    <property type="entry name" value="FAD-dep_OxRdtase"/>
</dbReference>
<dbReference type="InterPro" id="IPR036188">
    <property type="entry name" value="FAD/NAD-bd_sf"/>
</dbReference>
<dbReference type="InterPro" id="IPR008471">
    <property type="entry name" value="MnmC-like_methylTransf"/>
</dbReference>
<dbReference type="InterPro" id="IPR029063">
    <property type="entry name" value="SAM-dependent_MTases_sf"/>
</dbReference>
<dbReference type="InterPro" id="IPR023032">
    <property type="entry name" value="tRNA_MAMT_biosynth_bifunc_MnmC"/>
</dbReference>
<dbReference type="InterPro" id="IPR047785">
    <property type="entry name" value="tRNA_MNMC2"/>
</dbReference>
<dbReference type="InterPro" id="IPR017610">
    <property type="entry name" value="tRNA_S-uridine_synth_MnmC_C"/>
</dbReference>
<dbReference type="NCBIfam" id="TIGR03197">
    <property type="entry name" value="MnmC_Cterm"/>
    <property type="match status" value="1"/>
</dbReference>
<dbReference type="NCBIfam" id="NF033855">
    <property type="entry name" value="tRNA_MNMC2"/>
    <property type="match status" value="1"/>
</dbReference>
<dbReference type="PANTHER" id="PTHR13847:SF289">
    <property type="entry name" value="GLYCINE OXIDASE"/>
    <property type="match status" value="1"/>
</dbReference>
<dbReference type="PANTHER" id="PTHR13847">
    <property type="entry name" value="SARCOSINE DEHYDROGENASE-RELATED"/>
    <property type="match status" value="1"/>
</dbReference>
<dbReference type="Pfam" id="PF01266">
    <property type="entry name" value="DAO"/>
    <property type="match status" value="1"/>
</dbReference>
<dbReference type="Pfam" id="PF05430">
    <property type="entry name" value="Methyltransf_30"/>
    <property type="match status" value="1"/>
</dbReference>
<dbReference type="SUPFAM" id="SSF51971">
    <property type="entry name" value="Nucleotide-binding domain"/>
    <property type="match status" value="1"/>
</dbReference>
<accession>A5EWE5</accession>
<evidence type="ECO:0000255" key="1">
    <source>
        <dbReference type="HAMAP-Rule" id="MF_01102"/>
    </source>
</evidence>
<reference key="1">
    <citation type="journal article" date="2007" name="Nat. Biotechnol.">
        <title>Genome sequence and identification of candidate vaccine antigens from the animal pathogen Dichelobacter nodosus.</title>
        <authorList>
            <person name="Myers G.S.A."/>
            <person name="Parker D."/>
            <person name="Al-Hasani K."/>
            <person name="Kennan R.M."/>
            <person name="Seemann T."/>
            <person name="Ren Q."/>
            <person name="Badger J.H."/>
            <person name="Selengut J.D."/>
            <person name="Deboy R.T."/>
            <person name="Tettelin H."/>
            <person name="Boyce J.D."/>
            <person name="McCarl V.P."/>
            <person name="Han X."/>
            <person name="Nelson W.C."/>
            <person name="Madupu R."/>
            <person name="Mohamoud Y."/>
            <person name="Holley T."/>
            <person name="Fedorova N."/>
            <person name="Khouri H."/>
            <person name="Bottomley S.P."/>
            <person name="Whittington R.J."/>
            <person name="Adler B."/>
            <person name="Songer J.G."/>
            <person name="Rood J.I."/>
            <person name="Paulsen I.T."/>
        </authorList>
    </citation>
    <scope>NUCLEOTIDE SEQUENCE [LARGE SCALE GENOMIC DNA]</scope>
    <source>
        <strain>VCS1703A</strain>
    </source>
</reference>
<gene>
    <name evidence="1" type="primary">mnmC</name>
    <name type="ordered locus">DNO_0240</name>
</gene>
<sequence>MLQTYAPIDFRNNDPYNTDFEDIYYNPALGFAESDHVFIAGNHLRERFSALPEYGRFTLAETGFGTGLNMINAAAHFLECAPKTAALNLISCEAYPIELETLKRIHHHWHHHELRIALYQNYPHRASGMHLIRLHPRVCLLLLWGDATRCYQACMARVNAWFLDGFAPSKNPQMWQPELFREIARLSQPNATLATFTVAAQVREQLTAVGFNVHKQTGFAQKRHMLSAVYERPLSVEKSWTDYPAPKFDTRPIAVIGAGIAGATTAYELAQRGKVVHVYHDPENPCASAVPVAVPFFLPGKTDTPMRQFHLAAWHDLCRELKCCPQGIVDRMPIALAVAEESLARRKESLADLFEPEQADIEAKKLYFYQAGALDTPRLLTYLLADKNITQYAQKIAQLTPQAEGWRIGEQIYARVVLATSWQEQLLPNALQKRMRTVRGQATFFALNAPVAGEIFCAERSFIPLPDRVHMHVGSSYSVNDCDRMRRTQDDAEHAEACRARFPQHAIQLERAFVGIRAASRDYLPLIGAVVRAESVYQRYQKWSKDRNIPINEEIDYYPQLYMHSGLGSKGTLTAFLGAKILAAMMLGDPLPIDRKLLTSIVPTRFLVKDIIRGHLNN</sequence>
<name>MNMC_DICNV</name>
<proteinExistence type="inferred from homology"/>
<comment type="function">
    <text evidence="1">Catalyzes the last two steps in the biosynthesis of 5-methylaminomethyl-2-thiouridine (mnm(5)s(2)U) at the wobble position (U34) in tRNA. Catalyzes the FAD-dependent demodification of cmnm(5)s(2)U34 to nm(5)s(2)U34, followed by the transfer of a methyl group from S-adenosyl-L-methionine to nm(5)s(2)U34, to form mnm(5)s(2)U34.</text>
</comment>
<comment type="catalytic activity">
    <reaction evidence="1">
        <text>5-aminomethyl-2-thiouridine(34) in tRNA + S-adenosyl-L-methionine = 5-methylaminomethyl-2-thiouridine(34) in tRNA + S-adenosyl-L-homocysteine + H(+)</text>
        <dbReference type="Rhea" id="RHEA:19569"/>
        <dbReference type="Rhea" id="RHEA-COMP:10195"/>
        <dbReference type="Rhea" id="RHEA-COMP:10197"/>
        <dbReference type="ChEBI" id="CHEBI:15378"/>
        <dbReference type="ChEBI" id="CHEBI:57856"/>
        <dbReference type="ChEBI" id="CHEBI:59789"/>
        <dbReference type="ChEBI" id="CHEBI:74454"/>
        <dbReference type="ChEBI" id="CHEBI:74455"/>
        <dbReference type="EC" id="2.1.1.61"/>
    </reaction>
</comment>
<comment type="cofactor">
    <cofactor evidence="1">
        <name>FAD</name>
        <dbReference type="ChEBI" id="CHEBI:57692"/>
    </cofactor>
</comment>
<comment type="subcellular location">
    <subcellularLocation>
        <location evidence="1">Cytoplasm</location>
    </subcellularLocation>
</comment>
<comment type="similarity">
    <text evidence="1">In the N-terminal section; belongs to the methyltransferase superfamily. tRNA (mnm(5)s(2)U34)-methyltransferase family.</text>
</comment>
<comment type="similarity">
    <text evidence="1">In the C-terminal section; belongs to the DAO family.</text>
</comment>
<feature type="chain" id="PRO_0000347980" description="tRNA 5-methylaminomethyl-2-thiouridine biosynthesis bifunctional protein MnmC">
    <location>
        <begin position="1"/>
        <end position="618"/>
    </location>
</feature>
<feature type="region of interest" description="tRNA (mnm(5)s(2)U34)-methyltransferase">
    <location>
        <begin position="1"/>
        <end position="231"/>
    </location>
</feature>
<feature type="region of interest" description="FAD-dependent cmnm(5)s(2)U34 oxidoreductase">
    <location>
        <begin position="256"/>
        <end position="618"/>
    </location>
</feature>